<name>DTDA_CENSY</name>
<accession>A0RUG0</accession>
<comment type="function">
    <text evidence="1">D-aminoacyl-tRNA deacylase with broad substrate specificity. By recycling D-aminoacyl-tRNA to D-amino acids and free tRNA molecules, this enzyme counteracts the toxicity associated with the formation of D-aminoacyl-tRNA entities in vivo.</text>
</comment>
<comment type="catalytic activity">
    <reaction evidence="1">
        <text>a D-aminoacyl-tRNA + H2O = a tRNA + a D-alpha-amino acid + H(+)</text>
        <dbReference type="Rhea" id="RHEA:13953"/>
        <dbReference type="Rhea" id="RHEA-COMP:10123"/>
        <dbReference type="Rhea" id="RHEA-COMP:10124"/>
        <dbReference type="ChEBI" id="CHEBI:15377"/>
        <dbReference type="ChEBI" id="CHEBI:15378"/>
        <dbReference type="ChEBI" id="CHEBI:59871"/>
        <dbReference type="ChEBI" id="CHEBI:78442"/>
        <dbReference type="ChEBI" id="CHEBI:79333"/>
        <dbReference type="EC" id="3.1.1.96"/>
    </reaction>
</comment>
<comment type="catalytic activity">
    <reaction evidence="1">
        <text>glycyl-tRNA(Ala) + H2O = tRNA(Ala) + glycine + H(+)</text>
        <dbReference type="Rhea" id="RHEA:53744"/>
        <dbReference type="Rhea" id="RHEA-COMP:9657"/>
        <dbReference type="Rhea" id="RHEA-COMP:13640"/>
        <dbReference type="ChEBI" id="CHEBI:15377"/>
        <dbReference type="ChEBI" id="CHEBI:15378"/>
        <dbReference type="ChEBI" id="CHEBI:57305"/>
        <dbReference type="ChEBI" id="CHEBI:78442"/>
        <dbReference type="ChEBI" id="CHEBI:78522"/>
        <dbReference type="EC" id="3.1.1.96"/>
    </reaction>
</comment>
<comment type="cofactor">
    <cofactor evidence="1">
        <name>Zn(2+)</name>
        <dbReference type="ChEBI" id="CHEBI:29105"/>
    </cofactor>
    <text evidence="1">Binds 2 Zn(2+) ions per subunit.</text>
</comment>
<comment type="subunit">
    <text evidence="1">Monomer.</text>
</comment>
<comment type="similarity">
    <text evidence="1">Belongs to the DtdA deacylase family.</text>
</comment>
<sequence length="258" mass="28269">MDLLVAHGGDPAGSNMARYLAEGMEPDGKIWHGRHFDLVIIDSPAISADWIGGEYEYDGYVFLSRHGAESGKLALTCHSTGNFAEAQFGGSDREVAIPYPGFQRRYMRRLSERREKFNGFDITIEATHHGPTGLDKPSIFVEVGTTEKQWNDKGLCGAVAELVRETAEEQDEKTPFVICVGGTHYPEKFTDVLLKGEYALGTVVPKRALVNLDDKMFSHILERNAGAAAVLVDEGGLGPEKRRILNMLEGSGLEVISA</sequence>
<protein>
    <recommendedName>
        <fullName evidence="1">D-aminoacyl-tRNA deacylase</fullName>
        <ecNumber evidence="1">3.1.1.96</ecNumber>
    </recommendedName>
    <alternativeName>
        <fullName>D-tyrosyl-tRNA(Tyr) deacylase</fullName>
    </alternativeName>
</protein>
<keyword id="KW-0378">Hydrolase</keyword>
<keyword id="KW-0479">Metal-binding</keyword>
<keyword id="KW-1185">Reference proteome</keyword>
<keyword id="KW-0862">Zinc</keyword>
<feature type="chain" id="PRO_0000345207" description="D-aminoacyl-tRNA deacylase">
    <location>
        <begin position="1"/>
        <end position="258"/>
    </location>
</feature>
<organism>
    <name type="scientific">Cenarchaeum symbiosum (strain A)</name>
    <dbReference type="NCBI Taxonomy" id="414004"/>
    <lineage>
        <taxon>Archaea</taxon>
        <taxon>Nitrososphaerota</taxon>
        <taxon>Candidatus Cenarchaeales</taxon>
        <taxon>Candidatus Cenarchaeaceae</taxon>
        <taxon>Candidatus Cenarchaeum</taxon>
    </lineage>
</organism>
<gene>
    <name evidence="1" type="primary">dtdA</name>
    <name type="ordered locus">CENSYa_0341</name>
</gene>
<dbReference type="EC" id="3.1.1.96" evidence="1"/>
<dbReference type="EMBL" id="DP000238">
    <property type="protein sequence ID" value="ABK76977.1"/>
    <property type="molecule type" value="Genomic_DNA"/>
</dbReference>
<dbReference type="SMR" id="A0RUG0"/>
<dbReference type="STRING" id="414004.CENSYa_0341"/>
<dbReference type="EnsemblBacteria" id="ABK76977">
    <property type="protein sequence ID" value="ABK76977"/>
    <property type="gene ID" value="CENSYa_0341"/>
</dbReference>
<dbReference type="KEGG" id="csy:CENSYa_0341"/>
<dbReference type="PATRIC" id="fig|414004.10.peg.305"/>
<dbReference type="HOGENOM" id="CLU_056464_1_0_2"/>
<dbReference type="Proteomes" id="UP000000758">
    <property type="component" value="Chromosome"/>
</dbReference>
<dbReference type="GO" id="GO:0051499">
    <property type="term" value="F:D-aminoacyl-tRNA deacylase activity"/>
    <property type="evidence" value="ECO:0007669"/>
    <property type="project" value="UniProtKB-UniRule"/>
</dbReference>
<dbReference type="GO" id="GO:0008270">
    <property type="term" value="F:zinc ion binding"/>
    <property type="evidence" value="ECO:0007669"/>
    <property type="project" value="UniProtKB-UniRule"/>
</dbReference>
<dbReference type="GO" id="GO:0019478">
    <property type="term" value="P:D-amino acid catabolic process"/>
    <property type="evidence" value="ECO:0007669"/>
    <property type="project" value="UniProtKB-UniRule"/>
</dbReference>
<dbReference type="Gene3D" id="3.40.50.10700">
    <property type="entry name" value="AF0625-like"/>
    <property type="match status" value="1"/>
</dbReference>
<dbReference type="Gene3D" id="3.40.630.50">
    <property type="entry name" value="AF0625-like"/>
    <property type="match status" value="1"/>
</dbReference>
<dbReference type="HAMAP" id="MF_00562">
    <property type="entry name" value="Deacylase_DtdA"/>
    <property type="match status" value="1"/>
</dbReference>
<dbReference type="InterPro" id="IPR018033">
    <property type="entry name" value="Deacylase_DtdA_archaea"/>
</dbReference>
<dbReference type="InterPro" id="IPR007508">
    <property type="entry name" value="DtdA"/>
</dbReference>
<dbReference type="PANTHER" id="PTHR34667">
    <property type="entry name" value="D-AMINOACYL-TRNA DEACYLASE"/>
    <property type="match status" value="1"/>
</dbReference>
<dbReference type="PANTHER" id="PTHR34667:SF1">
    <property type="entry name" value="D-AMINOACYL-TRNA DEACYLASE"/>
    <property type="match status" value="1"/>
</dbReference>
<dbReference type="Pfam" id="PF04414">
    <property type="entry name" value="tRNA_deacylase"/>
    <property type="match status" value="1"/>
</dbReference>
<dbReference type="PIRSF" id="PIRSF016210">
    <property type="entry name" value="UCP016210"/>
    <property type="match status" value="1"/>
</dbReference>
<dbReference type="SUPFAM" id="SSF142535">
    <property type="entry name" value="AF0625-like"/>
    <property type="match status" value="1"/>
</dbReference>
<proteinExistence type="inferred from homology"/>
<evidence type="ECO:0000255" key="1">
    <source>
        <dbReference type="HAMAP-Rule" id="MF_00562"/>
    </source>
</evidence>
<reference key="1">
    <citation type="journal article" date="2006" name="Proc. Natl. Acad. Sci. U.S.A.">
        <title>Genomic analysis of the uncultivated marine crenarchaeote Cenarchaeum symbiosum.</title>
        <authorList>
            <person name="Hallam S.J."/>
            <person name="Konstantinidis K.T."/>
            <person name="Putnam N."/>
            <person name="Schleper C."/>
            <person name="Watanabe Y."/>
            <person name="Sugahara J."/>
            <person name="Preston C."/>
            <person name="de la Torre J."/>
            <person name="Richardson P.M."/>
            <person name="DeLong E.F."/>
        </authorList>
    </citation>
    <scope>NUCLEOTIDE SEQUENCE [LARGE SCALE GENOMIC DNA]</scope>
    <source>
        <strain>A</strain>
    </source>
</reference>